<dbReference type="EC" id="3.4.21.88" evidence="1"/>
<dbReference type="EMBL" id="CP000411">
    <property type="protein sequence ID" value="ABJ56879.1"/>
    <property type="molecule type" value="Genomic_DNA"/>
</dbReference>
<dbReference type="RefSeq" id="WP_011677590.1">
    <property type="nucleotide sequence ID" value="NC_008528.1"/>
</dbReference>
<dbReference type="SMR" id="Q04F93"/>
<dbReference type="STRING" id="203123.OEOE_0970"/>
<dbReference type="MEROPS" id="S24.001"/>
<dbReference type="KEGG" id="ooe:OEOE_0970"/>
<dbReference type="PATRIC" id="fig|203123.7.peg.983"/>
<dbReference type="eggNOG" id="COG1974">
    <property type="taxonomic scope" value="Bacteria"/>
</dbReference>
<dbReference type="HOGENOM" id="CLU_066192_45_1_9"/>
<dbReference type="Proteomes" id="UP000000774">
    <property type="component" value="Chromosome"/>
</dbReference>
<dbReference type="GO" id="GO:0003677">
    <property type="term" value="F:DNA binding"/>
    <property type="evidence" value="ECO:0007669"/>
    <property type="project" value="UniProtKB-UniRule"/>
</dbReference>
<dbReference type="GO" id="GO:0004252">
    <property type="term" value="F:serine-type endopeptidase activity"/>
    <property type="evidence" value="ECO:0007669"/>
    <property type="project" value="UniProtKB-UniRule"/>
</dbReference>
<dbReference type="GO" id="GO:0006281">
    <property type="term" value="P:DNA repair"/>
    <property type="evidence" value="ECO:0007669"/>
    <property type="project" value="UniProtKB-UniRule"/>
</dbReference>
<dbReference type="GO" id="GO:0006260">
    <property type="term" value="P:DNA replication"/>
    <property type="evidence" value="ECO:0007669"/>
    <property type="project" value="UniProtKB-UniRule"/>
</dbReference>
<dbReference type="GO" id="GO:0045892">
    <property type="term" value="P:negative regulation of DNA-templated transcription"/>
    <property type="evidence" value="ECO:0007669"/>
    <property type="project" value="UniProtKB-UniRule"/>
</dbReference>
<dbReference type="GO" id="GO:0006508">
    <property type="term" value="P:proteolysis"/>
    <property type="evidence" value="ECO:0007669"/>
    <property type="project" value="InterPro"/>
</dbReference>
<dbReference type="GO" id="GO:0009432">
    <property type="term" value="P:SOS response"/>
    <property type="evidence" value="ECO:0007669"/>
    <property type="project" value="UniProtKB-UniRule"/>
</dbReference>
<dbReference type="CDD" id="cd00090">
    <property type="entry name" value="HTH_ARSR"/>
    <property type="match status" value="1"/>
</dbReference>
<dbReference type="CDD" id="cd06529">
    <property type="entry name" value="S24_LexA-like"/>
    <property type="match status" value="1"/>
</dbReference>
<dbReference type="FunFam" id="2.10.109.10:FF:000001">
    <property type="entry name" value="LexA repressor"/>
    <property type="match status" value="1"/>
</dbReference>
<dbReference type="Gene3D" id="2.10.109.10">
    <property type="entry name" value="Umud Fragment, subunit A"/>
    <property type="match status" value="1"/>
</dbReference>
<dbReference type="Gene3D" id="1.10.10.10">
    <property type="entry name" value="Winged helix-like DNA-binding domain superfamily/Winged helix DNA-binding domain"/>
    <property type="match status" value="1"/>
</dbReference>
<dbReference type="HAMAP" id="MF_00015">
    <property type="entry name" value="LexA"/>
    <property type="match status" value="1"/>
</dbReference>
<dbReference type="InterPro" id="IPR011991">
    <property type="entry name" value="ArsR-like_HTH"/>
</dbReference>
<dbReference type="InterPro" id="IPR006200">
    <property type="entry name" value="LexA"/>
</dbReference>
<dbReference type="InterPro" id="IPR039418">
    <property type="entry name" value="LexA-like"/>
</dbReference>
<dbReference type="InterPro" id="IPR036286">
    <property type="entry name" value="LexA/Signal_pep-like_sf"/>
</dbReference>
<dbReference type="InterPro" id="IPR006199">
    <property type="entry name" value="LexA_DNA-bd_dom"/>
</dbReference>
<dbReference type="InterPro" id="IPR050077">
    <property type="entry name" value="LexA_repressor"/>
</dbReference>
<dbReference type="InterPro" id="IPR006197">
    <property type="entry name" value="Peptidase_S24_LexA"/>
</dbReference>
<dbReference type="InterPro" id="IPR015927">
    <property type="entry name" value="Peptidase_S24_S26A/B/C"/>
</dbReference>
<dbReference type="InterPro" id="IPR036388">
    <property type="entry name" value="WH-like_DNA-bd_sf"/>
</dbReference>
<dbReference type="InterPro" id="IPR036390">
    <property type="entry name" value="WH_DNA-bd_sf"/>
</dbReference>
<dbReference type="NCBIfam" id="TIGR00498">
    <property type="entry name" value="lexA"/>
    <property type="match status" value="1"/>
</dbReference>
<dbReference type="PANTHER" id="PTHR33516">
    <property type="entry name" value="LEXA REPRESSOR"/>
    <property type="match status" value="1"/>
</dbReference>
<dbReference type="PANTHER" id="PTHR33516:SF2">
    <property type="entry name" value="LEXA REPRESSOR-RELATED"/>
    <property type="match status" value="1"/>
</dbReference>
<dbReference type="Pfam" id="PF01726">
    <property type="entry name" value="LexA_DNA_bind"/>
    <property type="match status" value="1"/>
</dbReference>
<dbReference type="Pfam" id="PF00717">
    <property type="entry name" value="Peptidase_S24"/>
    <property type="match status" value="1"/>
</dbReference>
<dbReference type="PRINTS" id="PR00726">
    <property type="entry name" value="LEXASERPTASE"/>
</dbReference>
<dbReference type="SUPFAM" id="SSF51306">
    <property type="entry name" value="LexA/Signal peptidase"/>
    <property type="match status" value="1"/>
</dbReference>
<dbReference type="SUPFAM" id="SSF46785">
    <property type="entry name" value="Winged helix' DNA-binding domain"/>
    <property type="match status" value="1"/>
</dbReference>
<evidence type="ECO:0000255" key="1">
    <source>
        <dbReference type="HAMAP-Rule" id="MF_00015"/>
    </source>
</evidence>
<comment type="function">
    <text evidence="1">Represses a number of genes involved in the response to DNA damage (SOS response), including recA and lexA. In the presence of single-stranded DNA, RecA interacts with LexA causing an autocatalytic cleavage which disrupts the DNA-binding part of LexA, leading to derepression of the SOS regulon and eventually DNA repair.</text>
</comment>
<comment type="catalytic activity">
    <reaction evidence="1">
        <text>Hydrolysis of Ala-|-Gly bond in repressor LexA.</text>
        <dbReference type="EC" id="3.4.21.88"/>
    </reaction>
</comment>
<comment type="subunit">
    <text evidence="1">Homodimer.</text>
</comment>
<comment type="similarity">
    <text evidence="1">Belongs to the peptidase S24 family.</text>
</comment>
<feature type="chain" id="PRO_0000322751" description="LexA repressor">
    <location>
        <begin position="1"/>
        <end position="212"/>
    </location>
</feature>
<feature type="DNA-binding region" description="H-T-H motif" evidence="1">
    <location>
        <begin position="26"/>
        <end position="46"/>
    </location>
</feature>
<feature type="active site" description="For autocatalytic cleavage activity" evidence="1">
    <location>
        <position position="128"/>
    </location>
</feature>
<feature type="active site" description="For autocatalytic cleavage activity" evidence="1">
    <location>
        <position position="171"/>
    </location>
</feature>
<feature type="site" description="Cleavage; by autolysis" evidence="1">
    <location>
        <begin position="91"/>
        <end position="92"/>
    </location>
</feature>
<accession>Q04F93</accession>
<protein>
    <recommendedName>
        <fullName evidence="1">LexA repressor</fullName>
        <ecNumber evidence="1">3.4.21.88</ecNumber>
    </recommendedName>
</protein>
<proteinExistence type="inferred from homology"/>
<gene>
    <name evidence="1" type="primary">lexA</name>
    <name type="ordered locus">OEOE_0970</name>
</gene>
<name>LEXA_OENOB</name>
<sequence length="212" mass="23306">MAETKQLGILRFIYEKQNEKGYPPTVREIGEAVGLSSTSTVHGHIDRLEKHGLLHKDPTKPRAIEITEKGLRALGVPETPGKVPIIGLVTAGMPILAVEQAATEFLPIPSDLERFDGDLFVLRVSGTSMINIGILDGDMVFVRKQDYADNGDIVVAMTTDFGNGEGEATVKRFFKESNHYRLQPENDTMAPIIVKNVSILGKVVGLYRNSIY</sequence>
<organism>
    <name type="scientific">Oenococcus oeni (strain ATCC BAA-331 / PSU-1)</name>
    <dbReference type="NCBI Taxonomy" id="203123"/>
    <lineage>
        <taxon>Bacteria</taxon>
        <taxon>Bacillati</taxon>
        <taxon>Bacillota</taxon>
        <taxon>Bacilli</taxon>
        <taxon>Lactobacillales</taxon>
        <taxon>Lactobacillaceae</taxon>
        <taxon>Oenococcus</taxon>
    </lineage>
</organism>
<keyword id="KW-0068">Autocatalytic cleavage</keyword>
<keyword id="KW-0227">DNA damage</keyword>
<keyword id="KW-0234">DNA repair</keyword>
<keyword id="KW-0235">DNA replication</keyword>
<keyword id="KW-0238">DNA-binding</keyword>
<keyword id="KW-0378">Hydrolase</keyword>
<keyword id="KW-1185">Reference proteome</keyword>
<keyword id="KW-0678">Repressor</keyword>
<keyword id="KW-0742">SOS response</keyword>
<keyword id="KW-0804">Transcription</keyword>
<keyword id="KW-0805">Transcription regulation</keyword>
<reference key="1">
    <citation type="journal article" date="2006" name="Proc. Natl. Acad. Sci. U.S.A.">
        <title>Comparative genomics of the lactic acid bacteria.</title>
        <authorList>
            <person name="Makarova K.S."/>
            <person name="Slesarev A."/>
            <person name="Wolf Y.I."/>
            <person name="Sorokin A."/>
            <person name="Mirkin B."/>
            <person name="Koonin E.V."/>
            <person name="Pavlov A."/>
            <person name="Pavlova N."/>
            <person name="Karamychev V."/>
            <person name="Polouchine N."/>
            <person name="Shakhova V."/>
            <person name="Grigoriev I."/>
            <person name="Lou Y."/>
            <person name="Rohksar D."/>
            <person name="Lucas S."/>
            <person name="Huang K."/>
            <person name="Goodstein D.M."/>
            <person name="Hawkins T."/>
            <person name="Plengvidhya V."/>
            <person name="Welker D."/>
            <person name="Hughes J."/>
            <person name="Goh Y."/>
            <person name="Benson A."/>
            <person name="Baldwin K."/>
            <person name="Lee J.-H."/>
            <person name="Diaz-Muniz I."/>
            <person name="Dosti B."/>
            <person name="Smeianov V."/>
            <person name="Wechter W."/>
            <person name="Barabote R."/>
            <person name="Lorca G."/>
            <person name="Altermann E."/>
            <person name="Barrangou R."/>
            <person name="Ganesan B."/>
            <person name="Xie Y."/>
            <person name="Rawsthorne H."/>
            <person name="Tamir D."/>
            <person name="Parker C."/>
            <person name="Breidt F."/>
            <person name="Broadbent J.R."/>
            <person name="Hutkins R."/>
            <person name="O'Sullivan D."/>
            <person name="Steele J."/>
            <person name="Unlu G."/>
            <person name="Saier M.H. Jr."/>
            <person name="Klaenhammer T."/>
            <person name="Richardson P."/>
            <person name="Kozyavkin S."/>
            <person name="Weimer B.C."/>
            <person name="Mills D.A."/>
        </authorList>
    </citation>
    <scope>NUCLEOTIDE SEQUENCE [LARGE SCALE GENOMIC DNA]</scope>
    <source>
        <strain>ATCC BAA-331 / PSU-1</strain>
    </source>
</reference>